<name>RL14_SALPK</name>
<proteinExistence type="inferred from homology"/>
<gene>
    <name evidence="1" type="primary">rplN</name>
    <name type="ordered locus">SSPA3075</name>
</gene>
<accession>B5BGX6</accession>
<sequence>MIQEQTMLNVADNSGARRVMCIKVLGGSHRRYAGVGDIIKITIKEAIPRGKVKKGDVLKAVVVRTKKGVRRPDGSVIRFDGNACVILNNNSEQPIGTRIFGPVTRELRNEKFMKIISLAPEVL</sequence>
<organism>
    <name type="scientific">Salmonella paratyphi A (strain AKU_12601)</name>
    <dbReference type="NCBI Taxonomy" id="554290"/>
    <lineage>
        <taxon>Bacteria</taxon>
        <taxon>Pseudomonadati</taxon>
        <taxon>Pseudomonadota</taxon>
        <taxon>Gammaproteobacteria</taxon>
        <taxon>Enterobacterales</taxon>
        <taxon>Enterobacteriaceae</taxon>
        <taxon>Salmonella</taxon>
    </lineage>
</organism>
<reference key="1">
    <citation type="journal article" date="2009" name="BMC Genomics">
        <title>Pseudogene accumulation in the evolutionary histories of Salmonella enterica serovars Paratyphi A and Typhi.</title>
        <authorList>
            <person name="Holt K.E."/>
            <person name="Thomson N.R."/>
            <person name="Wain J."/>
            <person name="Langridge G.C."/>
            <person name="Hasan R."/>
            <person name="Bhutta Z.A."/>
            <person name="Quail M.A."/>
            <person name="Norbertczak H."/>
            <person name="Walker D."/>
            <person name="Simmonds M."/>
            <person name="White B."/>
            <person name="Bason N."/>
            <person name="Mungall K."/>
            <person name="Dougan G."/>
            <person name="Parkhill J."/>
        </authorList>
    </citation>
    <scope>NUCLEOTIDE SEQUENCE [LARGE SCALE GENOMIC DNA]</scope>
    <source>
        <strain>AKU_12601</strain>
    </source>
</reference>
<protein>
    <recommendedName>
        <fullName evidence="1">Large ribosomal subunit protein uL14</fullName>
    </recommendedName>
    <alternativeName>
        <fullName evidence="2">50S ribosomal protein L14</fullName>
    </alternativeName>
</protein>
<feature type="chain" id="PRO_1000144327" description="Large ribosomal subunit protein uL14">
    <location>
        <begin position="1"/>
        <end position="123"/>
    </location>
</feature>
<evidence type="ECO:0000255" key="1">
    <source>
        <dbReference type="HAMAP-Rule" id="MF_01367"/>
    </source>
</evidence>
<evidence type="ECO:0000305" key="2"/>
<dbReference type="EMBL" id="FM200053">
    <property type="protein sequence ID" value="CAR61326.1"/>
    <property type="molecule type" value="Genomic_DNA"/>
</dbReference>
<dbReference type="RefSeq" id="WP_000613954.1">
    <property type="nucleotide sequence ID" value="NC_011147.1"/>
</dbReference>
<dbReference type="SMR" id="B5BGX6"/>
<dbReference type="GeneID" id="98390432"/>
<dbReference type="KEGG" id="sek:SSPA3075"/>
<dbReference type="HOGENOM" id="CLU_095071_2_1_6"/>
<dbReference type="Proteomes" id="UP000001869">
    <property type="component" value="Chromosome"/>
</dbReference>
<dbReference type="GO" id="GO:0022625">
    <property type="term" value="C:cytosolic large ribosomal subunit"/>
    <property type="evidence" value="ECO:0007669"/>
    <property type="project" value="TreeGrafter"/>
</dbReference>
<dbReference type="GO" id="GO:0070180">
    <property type="term" value="F:large ribosomal subunit rRNA binding"/>
    <property type="evidence" value="ECO:0007669"/>
    <property type="project" value="TreeGrafter"/>
</dbReference>
<dbReference type="GO" id="GO:0003735">
    <property type="term" value="F:structural constituent of ribosome"/>
    <property type="evidence" value="ECO:0007669"/>
    <property type="project" value="InterPro"/>
</dbReference>
<dbReference type="GO" id="GO:0006412">
    <property type="term" value="P:translation"/>
    <property type="evidence" value="ECO:0007669"/>
    <property type="project" value="UniProtKB-UniRule"/>
</dbReference>
<dbReference type="CDD" id="cd00337">
    <property type="entry name" value="Ribosomal_uL14"/>
    <property type="match status" value="1"/>
</dbReference>
<dbReference type="FunFam" id="2.40.150.20:FF:000001">
    <property type="entry name" value="50S ribosomal protein L14"/>
    <property type="match status" value="1"/>
</dbReference>
<dbReference type="Gene3D" id="2.40.150.20">
    <property type="entry name" value="Ribosomal protein L14"/>
    <property type="match status" value="1"/>
</dbReference>
<dbReference type="HAMAP" id="MF_01367">
    <property type="entry name" value="Ribosomal_uL14"/>
    <property type="match status" value="1"/>
</dbReference>
<dbReference type="InterPro" id="IPR000218">
    <property type="entry name" value="Ribosomal_uL14"/>
</dbReference>
<dbReference type="InterPro" id="IPR005745">
    <property type="entry name" value="Ribosomal_uL14_bac-type"/>
</dbReference>
<dbReference type="InterPro" id="IPR019972">
    <property type="entry name" value="Ribosomal_uL14_CS"/>
</dbReference>
<dbReference type="InterPro" id="IPR036853">
    <property type="entry name" value="Ribosomal_uL14_sf"/>
</dbReference>
<dbReference type="NCBIfam" id="TIGR01067">
    <property type="entry name" value="rplN_bact"/>
    <property type="match status" value="1"/>
</dbReference>
<dbReference type="PANTHER" id="PTHR11761">
    <property type="entry name" value="50S/60S RIBOSOMAL PROTEIN L14/L23"/>
    <property type="match status" value="1"/>
</dbReference>
<dbReference type="PANTHER" id="PTHR11761:SF3">
    <property type="entry name" value="LARGE RIBOSOMAL SUBUNIT PROTEIN UL14M"/>
    <property type="match status" value="1"/>
</dbReference>
<dbReference type="Pfam" id="PF00238">
    <property type="entry name" value="Ribosomal_L14"/>
    <property type="match status" value="1"/>
</dbReference>
<dbReference type="SMART" id="SM01374">
    <property type="entry name" value="Ribosomal_L14"/>
    <property type="match status" value="1"/>
</dbReference>
<dbReference type="SUPFAM" id="SSF50193">
    <property type="entry name" value="Ribosomal protein L14"/>
    <property type="match status" value="1"/>
</dbReference>
<dbReference type="PROSITE" id="PS00049">
    <property type="entry name" value="RIBOSOMAL_L14"/>
    <property type="match status" value="1"/>
</dbReference>
<keyword id="KW-0687">Ribonucleoprotein</keyword>
<keyword id="KW-0689">Ribosomal protein</keyword>
<keyword id="KW-0694">RNA-binding</keyword>
<keyword id="KW-0699">rRNA-binding</keyword>
<comment type="function">
    <text evidence="1">Binds to 23S rRNA. Forms part of two intersubunit bridges in the 70S ribosome.</text>
</comment>
<comment type="subunit">
    <text evidence="1">Part of the 50S ribosomal subunit. Forms a cluster with proteins L3 and L19. In the 70S ribosome, L14 and L19 interact and together make contacts with the 16S rRNA in bridges B5 and B8.</text>
</comment>
<comment type="similarity">
    <text evidence="1">Belongs to the universal ribosomal protein uL14 family.</text>
</comment>